<accession>A4J7J9</accession>
<sequence>MLEFLNRFFGRESSSSKNVAKERLRLVLVHDRANVSPELLTSLKNDLIKVISNYMEIDDKALEVSLDGDDNQVALVANIPVKRLKRANSPVL</sequence>
<keyword id="KW-0131">Cell cycle</keyword>
<keyword id="KW-0132">Cell division</keyword>
<keyword id="KW-1185">Reference proteome</keyword>
<proteinExistence type="inferred from homology"/>
<dbReference type="EMBL" id="CP000612">
    <property type="protein sequence ID" value="ABO51052.1"/>
    <property type="molecule type" value="Genomic_DNA"/>
</dbReference>
<dbReference type="RefSeq" id="WP_011878850.1">
    <property type="nucleotide sequence ID" value="NC_009253.1"/>
</dbReference>
<dbReference type="SMR" id="A4J7J9"/>
<dbReference type="STRING" id="349161.Dred_2542"/>
<dbReference type="KEGG" id="drm:Dred_2542"/>
<dbReference type="eggNOG" id="COG0851">
    <property type="taxonomic scope" value="Bacteria"/>
</dbReference>
<dbReference type="HOGENOM" id="CLU_137929_1_1_9"/>
<dbReference type="OrthoDB" id="9796578at2"/>
<dbReference type="Proteomes" id="UP000001556">
    <property type="component" value="Chromosome"/>
</dbReference>
<dbReference type="GO" id="GO:0051301">
    <property type="term" value="P:cell division"/>
    <property type="evidence" value="ECO:0007669"/>
    <property type="project" value="UniProtKB-KW"/>
</dbReference>
<dbReference type="GO" id="GO:0032955">
    <property type="term" value="P:regulation of division septum assembly"/>
    <property type="evidence" value="ECO:0007669"/>
    <property type="project" value="InterPro"/>
</dbReference>
<dbReference type="Gene3D" id="3.30.1070.10">
    <property type="entry name" value="Cell division topological specificity factor MinE"/>
    <property type="match status" value="1"/>
</dbReference>
<dbReference type="HAMAP" id="MF_00262">
    <property type="entry name" value="MinE"/>
    <property type="match status" value="1"/>
</dbReference>
<dbReference type="InterPro" id="IPR005527">
    <property type="entry name" value="MinE"/>
</dbReference>
<dbReference type="InterPro" id="IPR036707">
    <property type="entry name" value="MinE_sf"/>
</dbReference>
<dbReference type="NCBIfam" id="TIGR01215">
    <property type="entry name" value="minE"/>
    <property type="match status" value="1"/>
</dbReference>
<dbReference type="NCBIfam" id="NF001422">
    <property type="entry name" value="PRK00296.1"/>
    <property type="match status" value="1"/>
</dbReference>
<dbReference type="Pfam" id="PF03776">
    <property type="entry name" value="MinE"/>
    <property type="match status" value="1"/>
</dbReference>
<dbReference type="SUPFAM" id="SSF55229">
    <property type="entry name" value="Cell division protein MinE topological specificity domain"/>
    <property type="match status" value="1"/>
</dbReference>
<reference key="1">
    <citation type="submission" date="2007-03" db="EMBL/GenBank/DDBJ databases">
        <title>Complete sequence of Desulfotomaculum reducens MI-1.</title>
        <authorList>
            <consortium name="US DOE Joint Genome Institute"/>
            <person name="Copeland A."/>
            <person name="Lucas S."/>
            <person name="Lapidus A."/>
            <person name="Barry K."/>
            <person name="Detter J.C."/>
            <person name="Glavina del Rio T."/>
            <person name="Hammon N."/>
            <person name="Israni S."/>
            <person name="Dalin E."/>
            <person name="Tice H."/>
            <person name="Pitluck S."/>
            <person name="Sims D."/>
            <person name="Brettin T."/>
            <person name="Bruce D."/>
            <person name="Han C."/>
            <person name="Tapia R."/>
            <person name="Schmutz J."/>
            <person name="Larimer F."/>
            <person name="Land M."/>
            <person name="Hauser L."/>
            <person name="Kyrpides N."/>
            <person name="Kim E."/>
            <person name="Tebo B.M."/>
            <person name="Richardson P."/>
        </authorList>
    </citation>
    <scope>NUCLEOTIDE SEQUENCE [LARGE SCALE GENOMIC DNA]</scope>
    <source>
        <strain>ATCC BAA-1160 / DSM 100696 / MI-1</strain>
    </source>
</reference>
<evidence type="ECO:0000255" key="1">
    <source>
        <dbReference type="HAMAP-Rule" id="MF_00262"/>
    </source>
</evidence>
<organism>
    <name type="scientific">Desulforamulus reducens (strain ATCC BAA-1160 / DSM 100696 / MI-1)</name>
    <name type="common">Desulfotomaculum reducens</name>
    <dbReference type="NCBI Taxonomy" id="349161"/>
    <lineage>
        <taxon>Bacteria</taxon>
        <taxon>Bacillati</taxon>
        <taxon>Bacillota</taxon>
        <taxon>Clostridia</taxon>
        <taxon>Eubacteriales</taxon>
        <taxon>Peptococcaceae</taxon>
        <taxon>Desulforamulus</taxon>
    </lineage>
</organism>
<name>MINE_DESRM</name>
<comment type="function">
    <text evidence="1">Prevents the cell division inhibition by proteins MinC and MinD at internal division sites while permitting inhibition at polar sites. This ensures cell division at the proper site by restricting the formation of a division septum at the midpoint of the long axis of the cell.</text>
</comment>
<comment type="similarity">
    <text evidence="1">Belongs to the MinE family.</text>
</comment>
<gene>
    <name evidence="1" type="primary">minE</name>
    <name type="ordered locus">Dred_2542</name>
</gene>
<protein>
    <recommendedName>
        <fullName evidence="1">Cell division topological specificity factor</fullName>
    </recommendedName>
</protein>
<feature type="chain" id="PRO_1000191275" description="Cell division topological specificity factor">
    <location>
        <begin position="1"/>
        <end position="92"/>
    </location>
</feature>